<accession>P35742</accession>
<feature type="chain" id="PRO_0000142613" description="Hemagglutinin-neuraminidase">
    <location>
        <begin position="1"/>
        <end position="571"/>
    </location>
</feature>
<feature type="topological domain" description="Intravirion" evidence="4">
    <location>
        <begin position="1"/>
        <end position="26"/>
    </location>
</feature>
<feature type="transmembrane region" description="Helical" evidence="4">
    <location>
        <begin position="27"/>
        <end position="47"/>
    </location>
</feature>
<feature type="topological domain" description="Virion surface" evidence="4">
    <location>
        <begin position="48"/>
        <end position="571"/>
    </location>
</feature>
<feature type="region of interest" description="Important for interaction with fusion/F protein" evidence="2">
    <location>
        <begin position="124"/>
        <end position="152"/>
    </location>
</feature>
<feature type="region of interest" description="Involved in neuraminidase activity" evidence="2">
    <location>
        <begin position="234"/>
        <end position="239"/>
    </location>
</feature>
<feature type="glycosylation site" description="N-linked (GlcNAc...) asparagine; by host" evidence="4">
    <location>
        <position position="119"/>
    </location>
</feature>
<feature type="glycosylation site" description="N-linked (GlcNAc...) asparagine; by host" evidence="2">
    <location>
        <position position="341"/>
    </location>
</feature>
<feature type="glycosylation site" description="N-linked (GlcNAc...) asparagine; by host" evidence="2">
    <location>
        <position position="481"/>
    </location>
</feature>
<feature type="glycosylation site" description="N-linked (GlcNAc...) asparagine; by host" evidence="4">
    <location>
        <position position="508"/>
    </location>
</feature>
<feature type="disulfide bond" evidence="3">
    <location>
        <begin position="172"/>
        <end position="196"/>
    </location>
</feature>
<feature type="disulfide bond" evidence="3">
    <location>
        <begin position="186"/>
        <end position="247"/>
    </location>
</feature>
<feature type="disulfide bond" evidence="3">
    <location>
        <begin position="238"/>
        <end position="251"/>
    </location>
</feature>
<feature type="disulfide bond" evidence="3">
    <location>
        <begin position="455"/>
        <end position="465"/>
    </location>
</feature>
<feature type="disulfide bond" evidence="3">
    <location>
        <begin position="531"/>
        <end position="542"/>
    </location>
</feature>
<organism>
    <name type="scientific">Newcastle disease virus (strain Iba/85)</name>
    <name type="common">NDV</name>
    <dbReference type="NCBI Taxonomy" id="11183"/>
    <lineage>
        <taxon>Viruses</taxon>
        <taxon>Riboviria</taxon>
        <taxon>Orthornavirae</taxon>
        <taxon>Negarnaviricota</taxon>
        <taxon>Haploviricotina</taxon>
        <taxon>Monjiviricetes</taxon>
        <taxon>Mononegavirales</taxon>
        <taxon>Paramyxoviridae</taxon>
        <taxon>Avulavirinae</taxon>
        <taxon>Orthoavulavirus</taxon>
        <taxon>Orthoavulavirus javaense</taxon>
        <taxon>Avian paramyxovirus 1</taxon>
    </lineage>
</organism>
<sequence>MDRAVSRVVLENEEREAKNTWRFVFRIAVLLLIVMTLAISAAALVYSMGASTPRDLASISTAISKMEDKITSSLSSNQDVVDRIYKQVALESPLALLNTESIIMNAITSLSYQINGAANNSGCGAPVHDPDYIGGIGKELIVDDTSDVTSFYPSAYQEHLNFIPAPTTGSGCTRIPSFDMSATHYCYTHNVILSGCRDHSHSHQYLALGVLRTSATGKVFFSTLRSINLDDTQNRKSCSVSATPLGCDMLCSKVTETEEEDYKSVTPTSMVHGRFRFDGQYHEKDSDRTTLFKDWVANYPGVGGGSFIDDRVWFPIYGGLKPNSPSDIAQEGKYVIYKRYNNTFPDKQDYQIRMAKSSYKPGRFGGKRVQQAILSIKVSTSLGEDPVLTVPPNTITLMGAEGRVLTVGTSHFLYQRGSSYFSPALLYPMTVYQQTATLHSPYTFNAFTRPGSVPCQASARCPNSCITGVYTDPYPLVFHRNHTLRGVFGTMLDDEQARLNPVSAVFDNISRSRVTRVSSSSTKAAYTTSTCFKVVKTSKAYCLSIAEISNTLFGEFRIVPLLVEILKDDRV</sequence>
<proteinExistence type="inferred from homology"/>
<evidence type="ECO:0000250" key="1">
    <source>
        <dbReference type="UniProtKB" id="P04853"/>
    </source>
</evidence>
<evidence type="ECO:0000250" key="2">
    <source>
        <dbReference type="UniProtKB" id="Q91UL0"/>
    </source>
</evidence>
<evidence type="ECO:0000250" key="3">
    <source>
        <dbReference type="UniProtKB" id="Q9WAF5"/>
    </source>
</evidence>
<evidence type="ECO:0000255" key="4"/>
<evidence type="ECO:0000305" key="5"/>
<protein>
    <recommendedName>
        <fullName>Hemagglutinin-neuraminidase</fullName>
        <ecNumber evidence="3">3.2.1.18</ecNumber>
    </recommendedName>
</protein>
<dbReference type="EC" id="3.2.1.18" evidence="3"/>
<dbReference type="EMBL" id="M24717">
    <property type="protein sequence ID" value="AAA46667.1"/>
    <property type="molecule type" value="Genomic_RNA"/>
</dbReference>
<dbReference type="PIR" id="D36829">
    <property type="entry name" value="D36829"/>
</dbReference>
<dbReference type="SMR" id="P35742"/>
<dbReference type="CAZy" id="GH83">
    <property type="family name" value="Glycoside Hydrolase Family 83"/>
</dbReference>
<dbReference type="GlyCosmos" id="P35742">
    <property type="glycosylation" value="4 sites, No reported glycans"/>
</dbReference>
<dbReference type="GO" id="GO:0020002">
    <property type="term" value="C:host cell plasma membrane"/>
    <property type="evidence" value="ECO:0007669"/>
    <property type="project" value="UniProtKB-SubCell"/>
</dbReference>
<dbReference type="GO" id="GO:0016020">
    <property type="term" value="C:membrane"/>
    <property type="evidence" value="ECO:0007669"/>
    <property type="project" value="UniProtKB-KW"/>
</dbReference>
<dbReference type="GO" id="GO:0019031">
    <property type="term" value="C:viral envelope"/>
    <property type="evidence" value="ECO:0007669"/>
    <property type="project" value="UniProtKB-KW"/>
</dbReference>
<dbReference type="GO" id="GO:0055036">
    <property type="term" value="C:virion membrane"/>
    <property type="evidence" value="ECO:0007669"/>
    <property type="project" value="UniProtKB-SubCell"/>
</dbReference>
<dbReference type="GO" id="GO:0004308">
    <property type="term" value="F:exo-alpha-sialidase activity"/>
    <property type="evidence" value="ECO:0007669"/>
    <property type="project" value="UniProtKB-EC"/>
</dbReference>
<dbReference type="GO" id="GO:0046789">
    <property type="term" value="F:host cell surface receptor binding"/>
    <property type="evidence" value="ECO:0007669"/>
    <property type="project" value="InterPro"/>
</dbReference>
<dbReference type="GO" id="GO:0046718">
    <property type="term" value="P:symbiont entry into host cell"/>
    <property type="evidence" value="ECO:0007669"/>
    <property type="project" value="UniProtKB-KW"/>
</dbReference>
<dbReference type="GO" id="GO:0019062">
    <property type="term" value="P:virion attachment to host cell"/>
    <property type="evidence" value="ECO:0007669"/>
    <property type="project" value="UniProtKB-KW"/>
</dbReference>
<dbReference type="CDD" id="cd15469">
    <property type="entry name" value="HN"/>
    <property type="match status" value="1"/>
</dbReference>
<dbReference type="FunFam" id="2.120.10.10:FF:000004">
    <property type="entry name" value="Hemagglutinin-neuraminidase"/>
    <property type="match status" value="1"/>
</dbReference>
<dbReference type="Gene3D" id="2.120.10.10">
    <property type="match status" value="1"/>
</dbReference>
<dbReference type="InterPro" id="IPR016285">
    <property type="entry name" value="Hemagglutn-neuramid"/>
</dbReference>
<dbReference type="InterPro" id="IPR000665">
    <property type="entry name" value="Hemagglutn/HN"/>
</dbReference>
<dbReference type="InterPro" id="IPR036278">
    <property type="entry name" value="Sialidase_sf"/>
</dbReference>
<dbReference type="Pfam" id="PF00423">
    <property type="entry name" value="HN"/>
    <property type="match status" value="1"/>
</dbReference>
<dbReference type="PIRSF" id="PIRSF001072">
    <property type="entry name" value="Hemagglut-neuramid_paramyxoV"/>
    <property type="match status" value="1"/>
</dbReference>
<dbReference type="SUPFAM" id="SSF50939">
    <property type="entry name" value="Sialidases"/>
    <property type="match status" value="1"/>
</dbReference>
<keyword id="KW-1015">Disulfide bond</keyword>
<keyword id="KW-0325">Glycoprotein</keyword>
<keyword id="KW-0348">Hemagglutinin</keyword>
<keyword id="KW-1032">Host cell membrane</keyword>
<keyword id="KW-1043">Host membrane</keyword>
<keyword id="KW-0945">Host-virus interaction</keyword>
<keyword id="KW-0378">Hydrolase</keyword>
<keyword id="KW-0472">Membrane</keyword>
<keyword id="KW-0735">Signal-anchor</keyword>
<keyword id="KW-0812">Transmembrane</keyword>
<keyword id="KW-1133">Transmembrane helix</keyword>
<keyword id="KW-1161">Viral attachment to host cell</keyword>
<keyword id="KW-0261">Viral envelope protein</keyword>
<keyword id="KW-0946">Virion</keyword>
<keyword id="KW-1160">Virus entry into host cell</keyword>
<name>HN_NDVJ</name>
<organismHost>
    <name type="scientific">Gallus gallus</name>
    <name type="common">Chicken</name>
    <dbReference type="NCBI Taxonomy" id="9031"/>
</organismHost>
<comment type="function">
    <text evidence="2">Mediates the viral entry into the host cell together with fusion/F protein. Attaches the virus to sialic acid-containing cell receptors and thereby initiates infection. Binding of HN protein to the receptor induces a conformational change that allows the F protein to trigger virion/cell membranes fusion.</text>
</comment>
<comment type="function">
    <text evidence="2">Neuraminidase activity ensures the efficient spread of the virus by dissociating the mature virions from the neuraminic acid containing glycoproteins.</text>
</comment>
<comment type="catalytic activity">
    <reaction evidence="2">
        <text>Hydrolysis of alpha-(2-&gt;3)-, alpha-(2-&gt;6)-, alpha-(2-&gt;8)- glycosidic linkages of terminal sialic acid residues in oligosaccharides, glycoproteins, glycolipids, colominic acid and synthetic substrates.</text>
        <dbReference type="EC" id="3.2.1.18"/>
    </reaction>
</comment>
<comment type="subunit">
    <text evidence="1 2 3">Homotetramer; composed of disulfide-linked homodimers (By similarity). Interacts with F protein trimer (By similarity). Interacts with host CG-1B; this interaction inhibits viral adsorption and replication rather than internalization (By similarity).</text>
</comment>
<comment type="subcellular location">
    <subcellularLocation>
        <location evidence="2">Virion membrane</location>
        <topology evidence="2">Single-pass type II membrane protein</topology>
    </subcellularLocation>
    <subcellularLocation>
        <location evidence="2">Host cell membrane</location>
        <topology evidence="2">Single-pass type II membrane protein</topology>
    </subcellularLocation>
</comment>
<comment type="domain">
    <text evidence="3">The C-terminus (head domain) is involved in binding the cellular receptor.</text>
</comment>
<comment type="similarity">
    <text evidence="5">Belongs to the paramyxoviruses hemagglutinin-neuraminidase family.</text>
</comment>
<gene>
    <name type="primary">HN</name>
</gene>
<reference key="1">
    <citation type="journal article" date="1989" name="Virology">
        <title>Newcastle disease virus evolution. I. Multiple lineages defined by sequence variability of the hemagglutinin-neuraminidase gene.</title>
        <authorList>
            <person name="Sakaguchi T."/>
            <person name="Toyoda T."/>
            <person name="Gotoh B."/>
            <person name="Inocencio N.M."/>
            <person name="Kuma K."/>
            <person name="Miyata T."/>
            <person name="Nagai Y."/>
        </authorList>
    </citation>
    <scope>NUCLEOTIDE SEQUENCE [GENOMIC RNA]</scope>
</reference>